<name>SRG5_CAEEL</name>
<accession>P54127</accession>
<accession>Q95ZP1</accession>
<organism>
    <name type="scientific">Caenorhabditis elegans</name>
    <dbReference type="NCBI Taxonomy" id="6239"/>
    <lineage>
        <taxon>Eukaryota</taxon>
        <taxon>Metazoa</taxon>
        <taxon>Ecdysozoa</taxon>
        <taxon>Nematoda</taxon>
        <taxon>Chromadorea</taxon>
        <taxon>Rhabditida</taxon>
        <taxon>Rhabditina</taxon>
        <taxon>Rhabditomorpha</taxon>
        <taxon>Rhabditoidea</taxon>
        <taxon>Rhabditidae</taxon>
        <taxon>Peloderinae</taxon>
        <taxon>Caenorhabditis</taxon>
    </lineage>
</organism>
<feature type="chain" id="PRO_0000104555" description="Serpentine receptor class gamma-5">
    <location>
        <begin position="1"/>
        <end position="323"/>
    </location>
</feature>
<feature type="transmembrane region" description="Helical" evidence="1">
    <location>
        <begin position="31"/>
        <end position="51"/>
    </location>
</feature>
<feature type="transmembrane region" description="Helical" evidence="1">
    <location>
        <begin position="63"/>
        <end position="83"/>
    </location>
</feature>
<feature type="transmembrane region" description="Helical" evidence="1">
    <location>
        <begin position="98"/>
        <end position="117"/>
    </location>
</feature>
<feature type="transmembrane region" description="Helical" evidence="1">
    <location>
        <begin position="151"/>
        <end position="171"/>
    </location>
</feature>
<feature type="transmembrane region" description="Helical" evidence="1">
    <location>
        <begin position="193"/>
        <end position="213"/>
    </location>
</feature>
<feature type="transmembrane region" description="Helical" evidence="1">
    <location>
        <begin position="245"/>
        <end position="265"/>
    </location>
</feature>
<feature type="transmembrane region" description="Helical" evidence="1">
    <location>
        <begin position="272"/>
        <end position="292"/>
    </location>
</feature>
<proteinExistence type="inferred from homology"/>
<sequence>MSQNSSFSDIFEDGCDLTYDPLPENLKYLTQLFYMVPGIIIHFRILSIMLFQHRKIYMIQSFFIIFSMDSIASLTQLILDLFIQRVIIYIPQLCPSLYPLFEHYVLFPNIIFSIYNYMRAAKSIIQIFLTVNRMTCVLAPLRYSQIWRRFIPVTIAFITLSPFLVIWNVIISETFPVSIFGGFTLAYTKRVRWASLSMFQMIFMAISLTITVFTTSITLFKMRRLENRLKSSERTLCFASFYMSAAFFSAALFQSYFAFFSITAAYTDLVYFLQGFAFDVLNVGSPIVMVLISGQLRYHVIPVKSMAPKHSTVVSVTSVIRKT</sequence>
<evidence type="ECO:0000255" key="1"/>
<evidence type="ECO:0000305" key="2"/>
<comment type="subcellular location">
    <subcellularLocation>
        <location evidence="2">Membrane</location>
        <topology evidence="2">Multi-pass membrane protein</topology>
    </subcellularLocation>
</comment>
<comment type="similarity">
    <text evidence="2">Belongs to the nematode receptor-like protein srg family.</text>
</comment>
<protein>
    <recommendedName>
        <fullName>Serpentine receptor class gamma-5</fullName>
        <shortName>Protein srg-5</shortName>
    </recommendedName>
</protein>
<reference key="1">
    <citation type="journal article" date="1998" name="Science">
        <title>Genome sequence of the nematode C. elegans: a platform for investigating biology.</title>
        <authorList>
            <consortium name="The C. elegans sequencing consortium"/>
        </authorList>
    </citation>
    <scope>NUCLEOTIDE SEQUENCE [LARGE SCALE GENOMIC DNA]</scope>
    <source>
        <strain>Bristol N2</strain>
    </source>
</reference>
<dbReference type="EMBL" id="FO080619">
    <property type="protein sequence ID" value="CCD65223.1"/>
    <property type="molecule type" value="Genomic_DNA"/>
</dbReference>
<dbReference type="PIR" id="T15558">
    <property type="entry name" value="T15558"/>
</dbReference>
<dbReference type="RefSeq" id="NP_001293634.1">
    <property type="nucleotide sequence ID" value="NM_001306705.2"/>
</dbReference>
<dbReference type="SMR" id="P54127"/>
<dbReference type="STRING" id="6239.T12A2.11.1"/>
<dbReference type="PaxDb" id="6239-T12A2.11"/>
<dbReference type="EnsemblMetazoa" id="T12A2.11.1">
    <property type="protein sequence ID" value="T12A2.11.1"/>
    <property type="gene ID" value="WBGene00005163"/>
</dbReference>
<dbReference type="EnsemblMetazoa" id="T12A2.11.2">
    <property type="protein sequence ID" value="T12A2.11.2"/>
    <property type="gene ID" value="WBGene00005163"/>
</dbReference>
<dbReference type="GeneID" id="24104887"/>
<dbReference type="KEGG" id="cel:CELE_T12A2.11"/>
<dbReference type="UCSC" id="T12A2.11">
    <property type="organism name" value="c. elegans"/>
</dbReference>
<dbReference type="AGR" id="WB:WBGene00005163"/>
<dbReference type="CTD" id="24104887"/>
<dbReference type="WormBase" id="T12A2.11">
    <property type="protein sequence ID" value="CE07480"/>
    <property type="gene ID" value="WBGene00005163"/>
    <property type="gene designation" value="srg-5"/>
</dbReference>
<dbReference type="eggNOG" id="ENOG502RVQJ">
    <property type="taxonomic scope" value="Eukaryota"/>
</dbReference>
<dbReference type="GeneTree" id="ENSGT00970000195841"/>
<dbReference type="HOGENOM" id="CLU_061253_1_0_1"/>
<dbReference type="InParanoid" id="P54127"/>
<dbReference type="OMA" id="FQSYFAF"/>
<dbReference type="OrthoDB" id="5849685at2759"/>
<dbReference type="PhylomeDB" id="P54127"/>
<dbReference type="PRO" id="PR:P54127"/>
<dbReference type="Proteomes" id="UP000001940">
    <property type="component" value="Chromosome III"/>
</dbReference>
<dbReference type="GO" id="GO:0016020">
    <property type="term" value="C:membrane"/>
    <property type="evidence" value="ECO:0007669"/>
    <property type="project" value="UniProtKB-SubCell"/>
</dbReference>
<dbReference type="GO" id="GO:0004888">
    <property type="term" value="F:transmembrane signaling receptor activity"/>
    <property type="evidence" value="ECO:0007669"/>
    <property type="project" value="InterPro"/>
</dbReference>
<dbReference type="GO" id="GO:0007606">
    <property type="term" value="P:sensory perception of chemical stimulus"/>
    <property type="evidence" value="ECO:0007669"/>
    <property type="project" value="InterPro"/>
</dbReference>
<dbReference type="InterPro" id="IPR000609">
    <property type="entry name" value="7TM_GPCR_serpentine_rcpt_Srg"/>
</dbReference>
<dbReference type="InterPro" id="IPR051119">
    <property type="entry name" value="Nematode_SR-like"/>
</dbReference>
<dbReference type="PANTHER" id="PTHR31627:SF13">
    <property type="entry name" value="SERPENTINE RECEPTOR CLASS GAMMA-1-RELATED"/>
    <property type="match status" value="1"/>
</dbReference>
<dbReference type="PANTHER" id="PTHR31627">
    <property type="entry name" value="SERPENTINE RECEPTOR CLASS GAMMA-RELATED"/>
    <property type="match status" value="1"/>
</dbReference>
<dbReference type="Pfam" id="PF02118">
    <property type="entry name" value="Srg"/>
    <property type="match status" value="1"/>
</dbReference>
<dbReference type="PRINTS" id="PR00698">
    <property type="entry name" value="TMPROTEINSRG"/>
</dbReference>
<gene>
    <name type="primary">srg-5</name>
    <name type="ORF">T12A2.11</name>
</gene>
<keyword id="KW-0472">Membrane</keyword>
<keyword id="KW-1185">Reference proteome</keyword>
<keyword id="KW-0812">Transmembrane</keyword>
<keyword id="KW-1133">Transmembrane helix</keyword>